<evidence type="ECO:0000255" key="1">
    <source>
        <dbReference type="HAMAP-Rule" id="MF_00184"/>
    </source>
</evidence>
<evidence type="ECO:0000255" key="2">
    <source>
        <dbReference type="PROSITE-ProRule" id="PRU01228"/>
    </source>
</evidence>
<feature type="chain" id="PRO_1000020486" description="Threonine--tRNA ligase">
    <location>
        <begin position="1"/>
        <end position="668"/>
    </location>
</feature>
<feature type="domain" description="TGS" evidence="2">
    <location>
        <begin position="1"/>
        <end position="64"/>
    </location>
</feature>
<feature type="region of interest" description="Catalytic" evidence="1">
    <location>
        <begin position="245"/>
        <end position="553"/>
    </location>
</feature>
<feature type="binding site" evidence="1">
    <location>
        <position position="347"/>
    </location>
    <ligand>
        <name>Zn(2+)</name>
        <dbReference type="ChEBI" id="CHEBI:29105"/>
    </ligand>
</feature>
<feature type="binding site" evidence="1">
    <location>
        <position position="398"/>
    </location>
    <ligand>
        <name>Zn(2+)</name>
        <dbReference type="ChEBI" id="CHEBI:29105"/>
    </ligand>
</feature>
<feature type="binding site" evidence="1">
    <location>
        <position position="530"/>
    </location>
    <ligand>
        <name>Zn(2+)</name>
        <dbReference type="ChEBI" id="CHEBI:29105"/>
    </ligand>
</feature>
<dbReference type="EC" id="6.1.1.3" evidence="1"/>
<dbReference type="EMBL" id="CP000133">
    <property type="protein sequence ID" value="ABC90977.1"/>
    <property type="molecule type" value="Genomic_DNA"/>
</dbReference>
<dbReference type="RefSeq" id="WP_011425458.1">
    <property type="nucleotide sequence ID" value="NC_007761.1"/>
</dbReference>
<dbReference type="SMR" id="Q2K859"/>
<dbReference type="KEGG" id="ret:RHE_CH02196"/>
<dbReference type="eggNOG" id="COG0441">
    <property type="taxonomic scope" value="Bacteria"/>
</dbReference>
<dbReference type="HOGENOM" id="CLU_008554_0_1_5"/>
<dbReference type="OrthoDB" id="9802304at2"/>
<dbReference type="Proteomes" id="UP000001936">
    <property type="component" value="Chromosome"/>
</dbReference>
<dbReference type="GO" id="GO:0005829">
    <property type="term" value="C:cytosol"/>
    <property type="evidence" value="ECO:0007669"/>
    <property type="project" value="TreeGrafter"/>
</dbReference>
<dbReference type="GO" id="GO:0005524">
    <property type="term" value="F:ATP binding"/>
    <property type="evidence" value="ECO:0007669"/>
    <property type="project" value="UniProtKB-UniRule"/>
</dbReference>
<dbReference type="GO" id="GO:0046872">
    <property type="term" value="F:metal ion binding"/>
    <property type="evidence" value="ECO:0007669"/>
    <property type="project" value="UniProtKB-KW"/>
</dbReference>
<dbReference type="GO" id="GO:0004829">
    <property type="term" value="F:threonine-tRNA ligase activity"/>
    <property type="evidence" value="ECO:0007669"/>
    <property type="project" value="UniProtKB-UniRule"/>
</dbReference>
<dbReference type="GO" id="GO:0000049">
    <property type="term" value="F:tRNA binding"/>
    <property type="evidence" value="ECO:0007669"/>
    <property type="project" value="UniProtKB-KW"/>
</dbReference>
<dbReference type="GO" id="GO:0006435">
    <property type="term" value="P:threonyl-tRNA aminoacylation"/>
    <property type="evidence" value="ECO:0007669"/>
    <property type="project" value="UniProtKB-UniRule"/>
</dbReference>
<dbReference type="CDD" id="cd01667">
    <property type="entry name" value="TGS_ThrRS"/>
    <property type="match status" value="1"/>
</dbReference>
<dbReference type="CDD" id="cd00860">
    <property type="entry name" value="ThrRS_anticodon"/>
    <property type="match status" value="1"/>
</dbReference>
<dbReference type="CDD" id="cd00771">
    <property type="entry name" value="ThrRS_core"/>
    <property type="match status" value="1"/>
</dbReference>
<dbReference type="FunFam" id="3.30.54.20:FF:000002">
    <property type="entry name" value="Threonine--tRNA ligase"/>
    <property type="match status" value="1"/>
</dbReference>
<dbReference type="FunFam" id="3.30.930.10:FF:000002">
    <property type="entry name" value="Threonine--tRNA ligase"/>
    <property type="match status" value="1"/>
</dbReference>
<dbReference type="FunFam" id="3.40.50.800:FF:000001">
    <property type="entry name" value="Threonine--tRNA ligase"/>
    <property type="match status" value="1"/>
</dbReference>
<dbReference type="FunFam" id="3.30.980.10:FF:000005">
    <property type="entry name" value="Threonyl-tRNA synthetase, mitochondrial"/>
    <property type="match status" value="1"/>
</dbReference>
<dbReference type="Gene3D" id="3.10.20.30">
    <property type="match status" value="1"/>
</dbReference>
<dbReference type="Gene3D" id="3.30.54.20">
    <property type="match status" value="1"/>
</dbReference>
<dbReference type="Gene3D" id="3.40.50.800">
    <property type="entry name" value="Anticodon-binding domain"/>
    <property type="match status" value="1"/>
</dbReference>
<dbReference type="Gene3D" id="3.30.930.10">
    <property type="entry name" value="Bira Bifunctional Protein, Domain 2"/>
    <property type="match status" value="1"/>
</dbReference>
<dbReference type="Gene3D" id="3.30.980.10">
    <property type="entry name" value="Threonyl-trna Synthetase, Chain A, domain 2"/>
    <property type="match status" value="1"/>
</dbReference>
<dbReference type="HAMAP" id="MF_00184">
    <property type="entry name" value="Thr_tRNA_synth"/>
    <property type="match status" value="1"/>
</dbReference>
<dbReference type="InterPro" id="IPR002314">
    <property type="entry name" value="aa-tRNA-synt_IIb"/>
</dbReference>
<dbReference type="InterPro" id="IPR006195">
    <property type="entry name" value="aa-tRNA-synth_II"/>
</dbReference>
<dbReference type="InterPro" id="IPR045864">
    <property type="entry name" value="aa-tRNA-synth_II/BPL/LPL"/>
</dbReference>
<dbReference type="InterPro" id="IPR004154">
    <property type="entry name" value="Anticodon-bd"/>
</dbReference>
<dbReference type="InterPro" id="IPR036621">
    <property type="entry name" value="Anticodon-bd_dom_sf"/>
</dbReference>
<dbReference type="InterPro" id="IPR012675">
    <property type="entry name" value="Beta-grasp_dom_sf"/>
</dbReference>
<dbReference type="InterPro" id="IPR004095">
    <property type="entry name" value="TGS"/>
</dbReference>
<dbReference type="InterPro" id="IPR012676">
    <property type="entry name" value="TGS-like"/>
</dbReference>
<dbReference type="InterPro" id="IPR002320">
    <property type="entry name" value="Thr-tRNA-ligase_IIa"/>
</dbReference>
<dbReference type="InterPro" id="IPR018163">
    <property type="entry name" value="Thr/Ala-tRNA-synth_IIc_edit"/>
</dbReference>
<dbReference type="InterPro" id="IPR047246">
    <property type="entry name" value="ThrRS_anticodon"/>
</dbReference>
<dbReference type="InterPro" id="IPR033728">
    <property type="entry name" value="ThrRS_core"/>
</dbReference>
<dbReference type="InterPro" id="IPR012947">
    <property type="entry name" value="tRNA_SAD"/>
</dbReference>
<dbReference type="NCBIfam" id="TIGR00418">
    <property type="entry name" value="thrS"/>
    <property type="match status" value="1"/>
</dbReference>
<dbReference type="PANTHER" id="PTHR11451:SF44">
    <property type="entry name" value="THREONINE--TRNA LIGASE, CHLOROPLASTIC_MITOCHONDRIAL 2"/>
    <property type="match status" value="1"/>
</dbReference>
<dbReference type="PANTHER" id="PTHR11451">
    <property type="entry name" value="THREONINE-TRNA LIGASE"/>
    <property type="match status" value="1"/>
</dbReference>
<dbReference type="Pfam" id="PF03129">
    <property type="entry name" value="HGTP_anticodon"/>
    <property type="match status" value="1"/>
</dbReference>
<dbReference type="Pfam" id="PF02824">
    <property type="entry name" value="TGS"/>
    <property type="match status" value="1"/>
</dbReference>
<dbReference type="Pfam" id="PF00587">
    <property type="entry name" value="tRNA-synt_2b"/>
    <property type="match status" value="1"/>
</dbReference>
<dbReference type="Pfam" id="PF07973">
    <property type="entry name" value="tRNA_SAD"/>
    <property type="match status" value="1"/>
</dbReference>
<dbReference type="PRINTS" id="PR01047">
    <property type="entry name" value="TRNASYNTHTHR"/>
</dbReference>
<dbReference type="SMART" id="SM00863">
    <property type="entry name" value="tRNA_SAD"/>
    <property type="match status" value="1"/>
</dbReference>
<dbReference type="SUPFAM" id="SSF52954">
    <property type="entry name" value="Class II aaRS ABD-related"/>
    <property type="match status" value="1"/>
</dbReference>
<dbReference type="SUPFAM" id="SSF55681">
    <property type="entry name" value="Class II aaRS and biotin synthetases"/>
    <property type="match status" value="1"/>
</dbReference>
<dbReference type="SUPFAM" id="SSF81271">
    <property type="entry name" value="TGS-like"/>
    <property type="match status" value="1"/>
</dbReference>
<dbReference type="SUPFAM" id="SSF55186">
    <property type="entry name" value="ThrRS/AlaRS common domain"/>
    <property type="match status" value="1"/>
</dbReference>
<dbReference type="PROSITE" id="PS50862">
    <property type="entry name" value="AA_TRNA_LIGASE_II"/>
    <property type="match status" value="1"/>
</dbReference>
<dbReference type="PROSITE" id="PS51880">
    <property type="entry name" value="TGS"/>
    <property type="match status" value="1"/>
</dbReference>
<sequence>MSQSVSLTFPDGSVRSFPAGATGRDVAESISKSLAKSAVAIAIDGGVRDLSDAVTDGKIEIITRKDPRALELIRHDAAHVMAEAVQELWPGTQVTIGPVIENGFYYDFAKNEPFTPDDLPKIEKKMKEIIARNAPFTKQIWSREKAKEVFAAKGEQYKVELVDAIPEGQDLKIYHQGEWFDLCRGPHMASTGQVGTAFKLMKVAGAYWRGDSNNAMLSRIYGTAWADQADLDNYLHMLAEAEKRDHRKLGREMDLFHFQEEGPGVVFWHGKGWRIFQTLVAYMRRRLAIDYEEVNAPQVLDTSLWETSGHWGWYQENMFGVKSAHAMTHPDDKEADNRVFALKPMNCPGHVQIFKHGLKSYRELPIRLAEFGLVHRYEPSGALHGLMRVRGFTQDDAHIFCTDEQMAAECLKINDLILSVYEDFGFKEIVVKLSTRPEKRVGSDALWDRAEAVMTDVLKTIEAQSEGRIKTGILPGEGAFYGPKFEYTLKDAIGREWQCGTTQVDFNLPERFGAFYIDSNSEKTQPVMIHRAICGSMERFLGILIENFAGHMPLWVSPLQVVVATITSEADAYGLEVAEALREAGLNVETDFRNEKINYKIREHSVTKVPVIIVCGRKEAEDRTVNIRRLGSQDQVSMGLDTAVESLALEATPPDVRRKADAKKAKAA</sequence>
<protein>
    <recommendedName>
        <fullName evidence="1">Threonine--tRNA ligase</fullName>
        <ecNumber evidence="1">6.1.1.3</ecNumber>
    </recommendedName>
    <alternativeName>
        <fullName evidence="1">Threonyl-tRNA synthetase</fullName>
        <shortName evidence="1">ThrRS</shortName>
    </alternativeName>
</protein>
<accession>Q2K859</accession>
<proteinExistence type="inferred from homology"/>
<gene>
    <name evidence="1" type="primary">thrS</name>
    <name type="ordered locus">RHE_CH02196</name>
</gene>
<name>SYT_RHIEC</name>
<keyword id="KW-0030">Aminoacyl-tRNA synthetase</keyword>
<keyword id="KW-0067">ATP-binding</keyword>
<keyword id="KW-0963">Cytoplasm</keyword>
<keyword id="KW-0436">Ligase</keyword>
<keyword id="KW-0479">Metal-binding</keyword>
<keyword id="KW-0547">Nucleotide-binding</keyword>
<keyword id="KW-0648">Protein biosynthesis</keyword>
<keyword id="KW-1185">Reference proteome</keyword>
<keyword id="KW-0694">RNA-binding</keyword>
<keyword id="KW-0820">tRNA-binding</keyword>
<keyword id="KW-0862">Zinc</keyword>
<reference key="1">
    <citation type="journal article" date="2006" name="Proc. Natl. Acad. Sci. U.S.A.">
        <title>The partitioned Rhizobium etli genome: genetic and metabolic redundancy in seven interacting replicons.</title>
        <authorList>
            <person name="Gonzalez V."/>
            <person name="Santamaria R.I."/>
            <person name="Bustos P."/>
            <person name="Hernandez-Gonzalez I."/>
            <person name="Medrano-Soto A."/>
            <person name="Moreno-Hagelsieb G."/>
            <person name="Janga S.C."/>
            <person name="Ramirez M.A."/>
            <person name="Jimenez-Jacinto V."/>
            <person name="Collado-Vides J."/>
            <person name="Davila G."/>
        </authorList>
    </citation>
    <scope>NUCLEOTIDE SEQUENCE [LARGE SCALE GENOMIC DNA]</scope>
    <source>
        <strain>ATCC 51251 / DSM 11541 / JCM 21823 / NBRC 15573 / CFN 42</strain>
    </source>
</reference>
<comment type="function">
    <text evidence="1">Catalyzes the attachment of threonine to tRNA(Thr) in a two-step reaction: L-threonine is first activated by ATP to form Thr-AMP and then transferred to the acceptor end of tRNA(Thr). Also edits incorrectly charged L-seryl-tRNA(Thr).</text>
</comment>
<comment type="catalytic activity">
    <reaction evidence="1">
        <text>tRNA(Thr) + L-threonine + ATP = L-threonyl-tRNA(Thr) + AMP + diphosphate + H(+)</text>
        <dbReference type="Rhea" id="RHEA:24624"/>
        <dbReference type="Rhea" id="RHEA-COMP:9670"/>
        <dbReference type="Rhea" id="RHEA-COMP:9704"/>
        <dbReference type="ChEBI" id="CHEBI:15378"/>
        <dbReference type="ChEBI" id="CHEBI:30616"/>
        <dbReference type="ChEBI" id="CHEBI:33019"/>
        <dbReference type="ChEBI" id="CHEBI:57926"/>
        <dbReference type="ChEBI" id="CHEBI:78442"/>
        <dbReference type="ChEBI" id="CHEBI:78534"/>
        <dbReference type="ChEBI" id="CHEBI:456215"/>
        <dbReference type="EC" id="6.1.1.3"/>
    </reaction>
</comment>
<comment type="cofactor">
    <cofactor evidence="1">
        <name>Zn(2+)</name>
        <dbReference type="ChEBI" id="CHEBI:29105"/>
    </cofactor>
    <text evidence="1">Binds 1 zinc ion per subunit.</text>
</comment>
<comment type="subunit">
    <text evidence="1">Homodimer.</text>
</comment>
<comment type="subcellular location">
    <subcellularLocation>
        <location evidence="1">Cytoplasm</location>
    </subcellularLocation>
</comment>
<comment type="similarity">
    <text evidence="1">Belongs to the class-II aminoacyl-tRNA synthetase family.</text>
</comment>
<organism>
    <name type="scientific">Rhizobium etli (strain ATCC 51251 / DSM 11541 / JCM 21823 / NBRC 15573 / CFN 42)</name>
    <dbReference type="NCBI Taxonomy" id="347834"/>
    <lineage>
        <taxon>Bacteria</taxon>
        <taxon>Pseudomonadati</taxon>
        <taxon>Pseudomonadota</taxon>
        <taxon>Alphaproteobacteria</taxon>
        <taxon>Hyphomicrobiales</taxon>
        <taxon>Rhizobiaceae</taxon>
        <taxon>Rhizobium/Agrobacterium group</taxon>
        <taxon>Rhizobium</taxon>
    </lineage>
</organism>